<keyword id="KW-0378">Hydrolase</keyword>
<comment type="function">
    <text evidence="1">Catalyzes the conversion of pppGpp to ppGpp. Guanosine pentaphosphate (pppGpp) is a cytoplasmic signaling molecule which together with ppGpp controls the 'stringent response', an adaptive process that allows bacteria to respond to amino acid starvation, resulting in the coordinated regulation of numerous cellular activities.</text>
</comment>
<comment type="catalytic activity">
    <reaction evidence="1">
        <text>guanosine 3'-diphosphate 5'-triphosphate + H2O = guanosine 3',5'-bis(diphosphate) + phosphate + H(+)</text>
        <dbReference type="Rhea" id="RHEA:13073"/>
        <dbReference type="ChEBI" id="CHEBI:15377"/>
        <dbReference type="ChEBI" id="CHEBI:15378"/>
        <dbReference type="ChEBI" id="CHEBI:43474"/>
        <dbReference type="ChEBI" id="CHEBI:77828"/>
        <dbReference type="ChEBI" id="CHEBI:142410"/>
        <dbReference type="EC" id="3.6.1.40"/>
    </reaction>
</comment>
<comment type="pathway">
    <text evidence="1">Purine metabolism; ppGpp biosynthesis; ppGpp from GTP: step 2/2.</text>
</comment>
<comment type="similarity">
    <text evidence="1">Belongs to the GppA/Ppx family. GppA subfamily.</text>
</comment>
<feature type="chain" id="PRO_1000185317" description="Guanosine-5'-triphosphate,3'-diphosphate pyrophosphatase">
    <location>
        <begin position="1"/>
        <end position="497"/>
    </location>
</feature>
<accession>B7VMF0</accession>
<evidence type="ECO:0000255" key="1">
    <source>
        <dbReference type="HAMAP-Rule" id="MF_01550"/>
    </source>
</evidence>
<sequence length="497" mass="54928">MSQTVSPPLYAAIDLGSNSFHMLVVRHIDGSVQTMAKIKRKVRLAAGLDENNALSTEAMQRGWDCLSLFAERLRDIPKENIRIVGTATLRTAINVDIFLEKANQILGYDINVISGEEEAATIYKGVAHTSGGSGRRLVVDIGGASTEMIIGEGFSAKALTSLKMGCVTWLERHFKDRQLTATNFNNAIEAAKSTLAPILDSYTDIGWDVCVGASGTVQALQEIMLAQGMDEVITHAKLKRLQKQAMITERLEELEIEGLTLERALVFPSGLSILIAIFELLEIDSMTLAGGALREGLAYEMVDEFRQEDIRARTIKSVQSRYQMDVSYSEQVAVVAQTLLEQAGAETWVSEPQAGVLLQTAAKLHEIGLTIDFKKGGEHSAYLLQNLDLPGFTRAQKHCLGELTRRYREQLTSLPEQHAISGTSSKRILRILRLAILLTHRRNPALEPEFKLTTDDNNLTLTLSKQWLADNPLTAAELEIESNRQTDIGWPLNIECL</sequence>
<proteinExistence type="inferred from homology"/>
<dbReference type="EC" id="3.6.1.40" evidence="1"/>
<dbReference type="EMBL" id="FM954972">
    <property type="protein sequence ID" value="CAV20341.1"/>
    <property type="molecule type" value="Genomic_DNA"/>
</dbReference>
<dbReference type="SMR" id="B7VMF0"/>
<dbReference type="STRING" id="575788.VS_3074"/>
<dbReference type="KEGG" id="vsp:VS_3074"/>
<dbReference type="PATRIC" id="fig|575788.5.peg.4251"/>
<dbReference type="eggNOG" id="COG0248">
    <property type="taxonomic scope" value="Bacteria"/>
</dbReference>
<dbReference type="HOGENOM" id="CLU_025908_4_0_6"/>
<dbReference type="UniPathway" id="UPA00908">
    <property type="reaction ID" value="UER00885"/>
</dbReference>
<dbReference type="Proteomes" id="UP000009100">
    <property type="component" value="Chromosome 1"/>
</dbReference>
<dbReference type="GO" id="GO:0008894">
    <property type="term" value="F:guanosine-5'-triphosphate,3'-diphosphate diphosphatase activity"/>
    <property type="evidence" value="ECO:0007669"/>
    <property type="project" value="UniProtKB-UniRule"/>
</dbReference>
<dbReference type="GO" id="GO:0015974">
    <property type="term" value="P:guanosine pentaphosphate catabolic process"/>
    <property type="evidence" value="ECO:0007669"/>
    <property type="project" value="InterPro"/>
</dbReference>
<dbReference type="GO" id="GO:0015970">
    <property type="term" value="P:guanosine tetraphosphate biosynthetic process"/>
    <property type="evidence" value="ECO:0007669"/>
    <property type="project" value="UniProtKB-UniRule"/>
</dbReference>
<dbReference type="GO" id="GO:0015949">
    <property type="term" value="P:nucleobase-containing small molecule interconversion"/>
    <property type="evidence" value="ECO:0007669"/>
    <property type="project" value="TreeGrafter"/>
</dbReference>
<dbReference type="FunFam" id="3.30.420.150:FF:000001">
    <property type="entry name" value="Guanosine-5'-triphosphate,3'-diphosphate pyrophosphatase"/>
    <property type="match status" value="1"/>
</dbReference>
<dbReference type="FunFam" id="3.30.420.40:FF:000023">
    <property type="entry name" value="Guanosine-5'-triphosphate,3'-diphosphate pyrophosphatase"/>
    <property type="match status" value="1"/>
</dbReference>
<dbReference type="Gene3D" id="3.30.420.40">
    <property type="match status" value="1"/>
</dbReference>
<dbReference type="Gene3D" id="3.30.420.150">
    <property type="entry name" value="Exopolyphosphatase. Domain 2"/>
    <property type="match status" value="1"/>
</dbReference>
<dbReference type="Gene3D" id="1.10.3210.10">
    <property type="entry name" value="Hypothetical protein af1432"/>
    <property type="match status" value="1"/>
</dbReference>
<dbReference type="HAMAP" id="MF_01550">
    <property type="entry name" value="GppA"/>
    <property type="match status" value="1"/>
</dbReference>
<dbReference type="InterPro" id="IPR043129">
    <property type="entry name" value="ATPase_NBD"/>
</dbReference>
<dbReference type="InterPro" id="IPR050273">
    <property type="entry name" value="GppA/Ppx_hydrolase"/>
</dbReference>
<dbReference type="InterPro" id="IPR023709">
    <property type="entry name" value="Guo-5TP_3DP_PyrP"/>
</dbReference>
<dbReference type="InterPro" id="IPR048950">
    <property type="entry name" value="Ppx_GppA_C"/>
</dbReference>
<dbReference type="InterPro" id="IPR003695">
    <property type="entry name" value="Ppx_GppA_N"/>
</dbReference>
<dbReference type="InterPro" id="IPR030673">
    <property type="entry name" value="PyroPPase_GppA_Ppx"/>
</dbReference>
<dbReference type="NCBIfam" id="NF008260">
    <property type="entry name" value="PRK11031.1"/>
    <property type="match status" value="1"/>
</dbReference>
<dbReference type="PANTHER" id="PTHR30005">
    <property type="entry name" value="EXOPOLYPHOSPHATASE"/>
    <property type="match status" value="1"/>
</dbReference>
<dbReference type="PANTHER" id="PTHR30005:SF0">
    <property type="entry name" value="RETROGRADE REGULATION PROTEIN 2"/>
    <property type="match status" value="1"/>
</dbReference>
<dbReference type="Pfam" id="PF02541">
    <property type="entry name" value="Ppx-GppA"/>
    <property type="match status" value="1"/>
</dbReference>
<dbReference type="Pfam" id="PF21447">
    <property type="entry name" value="Ppx-GppA_III"/>
    <property type="match status" value="1"/>
</dbReference>
<dbReference type="PIRSF" id="PIRSF001267">
    <property type="entry name" value="Pyrophosphatase_GppA_Ppx"/>
    <property type="match status" value="1"/>
</dbReference>
<dbReference type="SUPFAM" id="SSF53067">
    <property type="entry name" value="Actin-like ATPase domain"/>
    <property type="match status" value="2"/>
</dbReference>
<dbReference type="SUPFAM" id="SSF109604">
    <property type="entry name" value="HD-domain/PDEase-like"/>
    <property type="match status" value="1"/>
</dbReference>
<protein>
    <recommendedName>
        <fullName evidence="1">Guanosine-5'-triphosphate,3'-diphosphate pyrophosphatase</fullName>
        <ecNumber evidence="1">3.6.1.40</ecNumber>
    </recommendedName>
    <alternativeName>
        <fullName evidence="1">Guanosine pentaphosphate phosphohydrolase</fullName>
    </alternativeName>
    <alternativeName>
        <fullName evidence="1">pppGpp-5'-phosphohydrolase</fullName>
    </alternativeName>
</protein>
<organism>
    <name type="scientific">Vibrio atlanticus (strain LGP32)</name>
    <name type="common">Vibrio splendidus (strain Mel32)</name>
    <dbReference type="NCBI Taxonomy" id="575788"/>
    <lineage>
        <taxon>Bacteria</taxon>
        <taxon>Pseudomonadati</taxon>
        <taxon>Pseudomonadota</taxon>
        <taxon>Gammaproteobacteria</taxon>
        <taxon>Vibrionales</taxon>
        <taxon>Vibrionaceae</taxon>
        <taxon>Vibrio</taxon>
    </lineage>
</organism>
<reference key="1">
    <citation type="submission" date="2009-02" db="EMBL/GenBank/DDBJ databases">
        <title>Vibrio splendidus str. LGP32 complete genome.</title>
        <authorList>
            <person name="Mazel D."/>
            <person name="Le Roux F."/>
        </authorList>
    </citation>
    <scope>NUCLEOTIDE SEQUENCE [LARGE SCALE GENOMIC DNA]</scope>
    <source>
        <strain>LGP32</strain>
    </source>
</reference>
<name>GPPA_VIBA3</name>
<gene>
    <name evidence="1" type="primary">gppA</name>
    <name type="ordered locus">VS_3074</name>
</gene>